<feature type="chain" id="PRO_0000364175" description="Eukaryotic translation initiation factor 3 subunit D">
    <location>
        <begin position="1"/>
        <end position="586"/>
    </location>
</feature>
<feature type="region of interest" description="Disordered" evidence="3">
    <location>
        <begin position="107"/>
        <end position="154"/>
    </location>
</feature>
<feature type="region of interest" description="RNA gate" evidence="1">
    <location>
        <begin position="301"/>
        <end position="315"/>
    </location>
</feature>
<feature type="region of interest" description="Disordered" evidence="3">
    <location>
        <begin position="566"/>
        <end position="586"/>
    </location>
</feature>
<feature type="compositionally biased region" description="Gly residues" evidence="3">
    <location>
        <begin position="108"/>
        <end position="131"/>
    </location>
</feature>
<feature type="compositionally biased region" description="Acidic residues" evidence="3">
    <location>
        <begin position="566"/>
        <end position="577"/>
    </location>
</feature>
<comment type="function">
    <text evidence="2">mRNA cap-binding component of the eukaryotic translation initiation factor 3 (eIF-3) complex, which is involved in protein synthesis of a specialized repertoire of mRNAs and, together with other initiation factors, stimulates binding of mRNA and methionyl-tRNAi to the 40S ribosome. The eIF-3 complex specifically targets and initiates translation of a subset of mRNAs involved in cell proliferation. In the eIF-3 complex, eif3d specifically recognizes and binds the 7-methylguanosine cap of a subset of mRNAs.</text>
</comment>
<comment type="subunit">
    <text evidence="2">Component of the eukaryotic translation initiation factor 3 (eIF-3) complex.</text>
</comment>
<comment type="subcellular location">
    <subcellularLocation>
        <location evidence="2">Cytoplasm</location>
    </subcellularLocation>
</comment>
<comment type="domain">
    <text evidence="2">The RNA gate region regulates mRNA cap recognition to prevent promiscuous mRNA-binding before assembly of eif3d into the full eukaryotic translation initiation factor 3 (eIF-3) complex.</text>
</comment>
<comment type="similarity">
    <text evidence="2">Belongs to the eIF-3 subunit D family.</text>
</comment>
<accession>Q5AVZ0</accession>
<accession>C8VBM6</accession>
<name>EIF3D_EMENI</name>
<sequence length="586" mass="64872">MAPISIADIVAALPAEDTWGPVTSADNMLDGVPYAPFSKGDKLGRMADWTADSKDRDRGGRQAYNRNYRDQQVYGAGSSSLFAVQVAEDESTFSVVDNTRTSAKRTFGRGGGTVFRGRAQRGGAGQRGGRAGFQRVGAGRGQGGDRYYDNRGARGNRGRRFGWKDYDKPQRTREPSVNIRPDWSMLEEVDFNRLSKLNLQAPEGEDVDTYGFLYYYDRSYDKAPVKNAERRLQALDRAAYNVTTSQDPVIQELAEKNQATIFATSDILSMLMCAPRSVYSWDIVIVHQGNKIYFDKREGASLDLVTVNENAADAPLEVAESSGKQESINTPSALALEATFINHNFALQTVVEANNAKVDFNHPNPFYNAEEETEPLASKGYKYRRFDLSLESDEEPLNMIVRTEVDALVKNPVNGEDQQLVVKALNEFDSKAQGSGGSLDWRSKLYSQRGAVVATEMKNNSCKLARWTTQAILAKADGMKLGFVSRANPRSAAAHVVLGVAGYKPREFAAQMNLNLGNGWGIVRTIVDRIRALDADEEEDKVTKYILVKDPNRPVLRLYSVPANAFEEDDEAAEEEQEAKGEVEEA</sequence>
<keyword id="KW-0963">Cytoplasm</keyword>
<keyword id="KW-0396">Initiation factor</keyword>
<keyword id="KW-0648">Protein biosynthesis</keyword>
<keyword id="KW-1185">Reference proteome</keyword>
<keyword id="KW-0694">RNA-binding</keyword>
<proteinExistence type="inferred from homology"/>
<dbReference type="EMBL" id="AACD01000129">
    <property type="protein sequence ID" value="EAA62120.1"/>
    <property type="molecule type" value="Genomic_DNA"/>
</dbReference>
<dbReference type="EMBL" id="BN001304">
    <property type="protein sequence ID" value="CBF79596.1"/>
    <property type="molecule type" value="Genomic_DNA"/>
</dbReference>
<dbReference type="RefSeq" id="XP_680809.1">
    <property type="nucleotide sequence ID" value="XM_675717.1"/>
</dbReference>
<dbReference type="SMR" id="Q5AVZ0"/>
<dbReference type="STRING" id="227321.Q5AVZ0"/>
<dbReference type="EnsemblFungi" id="CBF79596">
    <property type="protein sequence ID" value="CBF79596"/>
    <property type="gene ID" value="ANIA_07540"/>
</dbReference>
<dbReference type="KEGG" id="ani:ANIA_07540"/>
<dbReference type="VEuPathDB" id="FungiDB:AN7540"/>
<dbReference type="eggNOG" id="KOG2479">
    <property type="taxonomic scope" value="Eukaryota"/>
</dbReference>
<dbReference type="HOGENOM" id="CLU_024521_2_0_1"/>
<dbReference type="InParanoid" id="Q5AVZ0"/>
<dbReference type="OMA" id="FMDKRDN"/>
<dbReference type="OrthoDB" id="16538at2759"/>
<dbReference type="Proteomes" id="UP000000560">
    <property type="component" value="Chromosome IV"/>
</dbReference>
<dbReference type="GO" id="GO:0005829">
    <property type="term" value="C:cytosol"/>
    <property type="evidence" value="ECO:0007669"/>
    <property type="project" value="EnsemblFungi"/>
</dbReference>
<dbReference type="GO" id="GO:0016282">
    <property type="term" value="C:eukaryotic 43S preinitiation complex"/>
    <property type="evidence" value="ECO:0007669"/>
    <property type="project" value="UniProtKB-UniRule"/>
</dbReference>
<dbReference type="GO" id="GO:0033290">
    <property type="term" value="C:eukaryotic 48S preinitiation complex"/>
    <property type="evidence" value="ECO:0007669"/>
    <property type="project" value="UniProtKB-UniRule"/>
</dbReference>
<dbReference type="GO" id="GO:0005852">
    <property type="term" value="C:eukaryotic translation initiation factor 3 complex"/>
    <property type="evidence" value="ECO:0000318"/>
    <property type="project" value="GO_Central"/>
</dbReference>
<dbReference type="GO" id="GO:0071540">
    <property type="term" value="C:eukaryotic translation initiation factor 3 complex, eIF3e"/>
    <property type="evidence" value="ECO:0007669"/>
    <property type="project" value="EnsemblFungi"/>
</dbReference>
<dbReference type="GO" id="GO:0071541">
    <property type="term" value="C:eukaryotic translation initiation factor 3 complex, eIF3m"/>
    <property type="evidence" value="ECO:0007669"/>
    <property type="project" value="EnsemblFungi"/>
</dbReference>
<dbReference type="GO" id="GO:0098808">
    <property type="term" value="F:mRNA cap binding"/>
    <property type="evidence" value="ECO:0007669"/>
    <property type="project" value="UniProtKB-UniRule"/>
</dbReference>
<dbReference type="GO" id="GO:0003743">
    <property type="term" value="F:translation initiation factor activity"/>
    <property type="evidence" value="ECO:0000318"/>
    <property type="project" value="GO_Central"/>
</dbReference>
<dbReference type="GO" id="GO:0002191">
    <property type="term" value="P:cap-dependent translational initiation"/>
    <property type="evidence" value="ECO:0007669"/>
    <property type="project" value="UniProtKB-UniRule"/>
</dbReference>
<dbReference type="GO" id="GO:0001732">
    <property type="term" value="P:formation of cytoplasmic translation initiation complex"/>
    <property type="evidence" value="ECO:0007669"/>
    <property type="project" value="UniProtKB-UniRule"/>
</dbReference>
<dbReference type="GO" id="GO:0006413">
    <property type="term" value="P:translational initiation"/>
    <property type="evidence" value="ECO:0000318"/>
    <property type="project" value="GO_Central"/>
</dbReference>
<dbReference type="HAMAP" id="MF_03003">
    <property type="entry name" value="eIF3d"/>
    <property type="match status" value="1"/>
</dbReference>
<dbReference type="InterPro" id="IPR007783">
    <property type="entry name" value="eIF3d"/>
</dbReference>
<dbReference type="PANTHER" id="PTHR12399">
    <property type="entry name" value="EUKARYOTIC TRANSLATION INITIATION FACTOR 3 SUBUNIT 7"/>
    <property type="match status" value="1"/>
</dbReference>
<dbReference type="PANTHER" id="PTHR12399:SF0">
    <property type="entry name" value="EUKARYOTIC TRANSLATION INITIATION FACTOR 3 SUBUNIT D"/>
    <property type="match status" value="1"/>
</dbReference>
<dbReference type="Pfam" id="PF05091">
    <property type="entry name" value="eIF-3_zeta"/>
    <property type="match status" value="1"/>
</dbReference>
<dbReference type="PIRSF" id="PIRSF016281">
    <property type="entry name" value="EIF-3_zeta"/>
    <property type="match status" value="1"/>
</dbReference>
<protein>
    <recommendedName>
        <fullName evidence="2">Eukaryotic translation initiation factor 3 subunit D</fullName>
        <shortName evidence="2">eIF3d</shortName>
    </recommendedName>
</protein>
<gene>
    <name type="ORF">AN7540</name>
</gene>
<organism>
    <name type="scientific">Emericella nidulans (strain FGSC A4 / ATCC 38163 / CBS 112.46 / NRRL 194 / M139)</name>
    <name type="common">Aspergillus nidulans</name>
    <dbReference type="NCBI Taxonomy" id="227321"/>
    <lineage>
        <taxon>Eukaryota</taxon>
        <taxon>Fungi</taxon>
        <taxon>Dikarya</taxon>
        <taxon>Ascomycota</taxon>
        <taxon>Pezizomycotina</taxon>
        <taxon>Eurotiomycetes</taxon>
        <taxon>Eurotiomycetidae</taxon>
        <taxon>Eurotiales</taxon>
        <taxon>Aspergillaceae</taxon>
        <taxon>Aspergillus</taxon>
        <taxon>Aspergillus subgen. Nidulantes</taxon>
    </lineage>
</organism>
<reference key="1">
    <citation type="journal article" date="2005" name="Nature">
        <title>Sequencing of Aspergillus nidulans and comparative analysis with A. fumigatus and A. oryzae.</title>
        <authorList>
            <person name="Galagan J.E."/>
            <person name="Calvo S.E."/>
            <person name="Cuomo C."/>
            <person name="Ma L.-J."/>
            <person name="Wortman J.R."/>
            <person name="Batzoglou S."/>
            <person name="Lee S.-I."/>
            <person name="Bastuerkmen M."/>
            <person name="Spevak C.C."/>
            <person name="Clutterbuck J."/>
            <person name="Kapitonov V."/>
            <person name="Jurka J."/>
            <person name="Scazzocchio C."/>
            <person name="Farman M.L."/>
            <person name="Butler J."/>
            <person name="Purcell S."/>
            <person name="Harris S."/>
            <person name="Braus G.H."/>
            <person name="Draht O."/>
            <person name="Busch S."/>
            <person name="D'Enfert C."/>
            <person name="Bouchier C."/>
            <person name="Goldman G.H."/>
            <person name="Bell-Pedersen D."/>
            <person name="Griffiths-Jones S."/>
            <person name="Doonan J.H."/>
            <person name="Yu J."/>
            <person name="Vienken K."/>
            <person name="Pain A."/>
            <person name="Freitag M."/>
            <person name="Selker E.U."/>
            <person name="Archer D.B."/>
            <person name="Penalva M.A."/>
            <person name="Oakley B.R."/>
            <person name="Momany M."/>
            <person name="Tanaka T."/>
            <person name="Kumagai T."/>
            <person name="Asai K."/>
            <person name="Machida M."/>
            <person name="Nierman W.C."/>
            <person name="Denning D.W."/>
            <person name="Caddick M.X."/>
            <person name="Hynes M."/>
            <person name="Paoletti M."/>
            <person name="Fischer R."/>
            <person name="Miller B.L."/>
            <person name="Dyer P.S."/>
            <person name="Sachs M.S."/>
            <person name="Osmani S.A."/>
            <person name="Birren B.W."/>
        </authorList>
    </citation>
    <scope>NUCLEOTIDE SEQUENCE [LARGE SCALE GENOMIC DNA]</scope>
    <source>
        <strain>FGSC A4 / ATCC 38163 / CBS 112.46 / NRRL 194 / M139</strain>
    </source>
</reference>
<reference key="2">
    <citation type="journal article" date="2009" name="Fungal Genet. Biol.">
        <title>The 2008 update of the Aspergillus nidulans genome annotation: a community effort.</title>
        <authorList>
            <person name="Wortman J.R."/>
            <person name="Gilsenan J.M."/>
            <person name="Joardar V."/>
            <person name="Deegan J."/>
            <person name="Clutterbuck J."/>
            <person name="Andersen M.R."/>
            <person name="Archer D."/>
            <person name="Bencina M."/>
            <person name="Braus G."/>
            <person name="Coutinho P."/>
            <person name="von Dohren H."/>
            <person name="Doonan J."/>
            <person name="Driessen A.J."/>
            <person name="Durek P."/>
            <person name="Espeso E."/>
            <person name="Fekete E."/>
            <person name="Flipphi M."/>
            <person name="Estrada C.G."/>
            <person name="Geysens S."/>
            <person name="Goldman G."/>
            <person name="de Groot P.W."/>
            <person name="Hansen K."/>
            <person name="Harris S.D."/>
            <person name="Heinekamp T."/>
            <person name="Helmstaedt K."/>
            <person name="Henrissat B."/>
            <person name="Hofmann G."/>
            <person name="Homan T."/>
            <person name="Horio T."/>
            <person name="Horiuchi H."/>
            <person name="James S."/>
            <person name="Jones M."/>
            <person name="Karaffa L."/>
            <person name="Karanyi Z."/>
            <person name="Kato M."/>
            <person name="Keller N."/>
            <person name="Kelly D.E."/>
            <person name="Kiel J.A."/>
            <person name="Kim J.M."/>
            <person name="van der Klei I.J."/>
            <person name="Klis F.M."/>
            <person name="Kovalchuk A."/>
            <person name="Krasevec N."/>
            <person name="Kubicek C.P."/>
            <person name="Liu B."/>
            <person name="Maccabe A."/>
            <person name="Meyer V."/>
            <person name="Mirabito P."/>
            <person name="Miskei M."/>
            <person name="Mos M."/>
            <person name="Mullins J."/>
            <person name="Nelson D.R."/>
            <person name="Nielsen J."/>
            <person name="Oakley B.R."/>
            <person name="Osmani S.A."/>
            <person name="Pakula T."/>
            <person name="Paszewski A."/>
            <person name="Paulsen I."/>
            <person name="Pilsyk S."/>
            <person name="Pocsi I."/>
            <person name="Punt P.J."/>
            <person name="Ram A.F."/>
            <person name="Ren Q."/>
            <person name="Robellet X."/>
            <person name="Robson G."/>
            <person name="Seiboth B."/>
            <person name="van Solingen P."/>
            <person name="Specht T."/>
            <person name="Sun J."/>
            <person name="Taheri-Talesh N."/>
            <person name="Takeshita N."/>
            <person name="Ussery D."/>
            <person name="vanKuyk P.A."/>
            <person name="Visser H."/>
            <person name="van de Vondervoort P.J."/>
            <person name="de Vries R.P."/>
            <person name="Walton J."/>
            <person name="Xiang X."/>
            <person name="Xiong Y."/>
            <person name="Zeng A.P."/>
            <person name="Brandt B.W."/>
            <person name="Cornell M.J."/>
            <person name="van den Hondel C.A."/>
            <person name="Visser J."/>
            <person name="Oliver S.G."/>
            <person name="Turner G."/>
        </authorList>
    </citation>
    <scope>GENOME REANNOTATION</scope>
    <source>
        <strain>FGSC A4 / ATCC 38163 / CBS 112.46 / NRRL 194 / M139</strain>
    </source>
</reference>
<evidence type="ECO:0000250" key="1">
    <source>
        <dbReference type="UniProtKB" id="K7IM66"/>
    </source>
</evidence>
<evidence type="ECO:0000255" key="2">
    <source>
        <dbReference type="HAMAP-Rule" id="MF_03003"/>
    </source>
</evidence>
<evidence type="ECO:0000256" key="3">
    <source>
        <dbReference type="SAM" id="MobiDB-lite"/>
    </source>
</evidence>